<accession>A9AKB1</accession>
<organism>
    <name type="scientific">Burkholderia multivorans (strain ATCC 17616 / 249)</name>
    <dbReference type="NCBI Taxonomy" id="395019"/>
    <lineage>
        <taxon>Bacteria</taxon>
        <taxon>Pseudomonadati</taxon>
        <taxon>Pseudomonadota</taxon>
        <taxon>Betaproteobacteria</taxon>
        <taxon>Burkholderiales</taxon>
        <taxon>Burkholderiaceae</taxon>
        <taxon>Burkholderia</taxon>
        <taxon>Burkholderia cepacia complex</taxon>
    </lineage>
</organism>
<reference key="1">
    <citation type="submission" date="2007-10" db="EMBL/GenBank/DDBJ databases">
        <title>Complete sequence of chromosome 1 of Burkholderia multivorans ATCC 17616.</title>
        <authorList>
            <person name="Copeland A."/>
            <person name="Lucas S."/>
            <person name="Lapidus A."/>
            <person name="Barry K."/>
            <person name="Glavina del Rio T."/>
            <person name="Dalin E."/>
            <person name="Tice H."/>
            <person name="Pitluck S."/>
            <person name="Chain P."/>
            <person name="Malfatti S."/>
            <person name="Shin M."/>
            <person name="Vergez L."/>
            <person name="Schmutz J."/>
            <person name="Larimer F."/>
            <person name="Land M."/>
            <person name="Hauser L."/>
            <person name="Kyrpides N."/>
            <person name="Kim E."/>
            <person name="Tiedje J."/>
            <person name="Richardson P."/>
        </authorList>
    </citation>
    <scope>NUCLEOTIDE SEQUENCE [LARGE SCALE GENOMIC DNA]</scope>
    <source>
        <strain>ATCC 17616 / 249</strain>
    </source>
</reference>
<reference key="2">
    <citation type="submission" date="2007-04" db="EMBL/GenBank/DDBJ databases">
        <title>Complete genome sequence of Burkholderia multivorans ATCC 17616.</title>
        <authorList>
            <person name="Ohtsubo Y."/>
            <person name="Yamashita A."/>
            <person name="Kurokawa K."/>
            <person name="Takami H."/>
            <person name="Yuhara S."/>
            <person name="Nishiyama E."/>
            <person name="Endo R."/>
            <person name="Miyazaki R."/>
            <person name="Ono A."/>
            <person name="Yano K."/>
            <person name="Ito M."/>
            <person name="Sota M."/>
            <person name="Yuji N."/>
            <person name="Hattori M."/>
            <person name="Tsuda M."/>
        </authorList>
    </citation>
    <scope>NUCLEOTIDE SEQUENCE [LARGE SCALE GENOMIC DNA]</scope>
    <source>
        <strain>ATCC 17616 / 249</strain>
    </source>
</reference>
<name>GLMU_BURM1</name>
<protein>
    <recommendedName>
        <fullName evidence="1">Bifunctional protein GlmU</fullName>
    </recommendedName>
    <domain>
        <recommendedName>
            <fullName evidence="1">UDP-N-acetylglucosamine pyrophosphorylase</fullName>
            <ecNumber evidence="1">2.7.7.23</ecNumber>
        </recommendedName>
        <alternativeName>
            <fullName evidence="1">N-acetylglucosamine-1-phosphate uridyltransferase</fullName>
        </alternativeName>
    </domain>
    <domain>
        <recommendedName>
            <fullName evidence="1">Glucosamine-1-phosphate N-acetyltransferase</fullName>
            <ecNumber evidence="1">2.3.1.157</ecNumber>
        </recommendedName>
    </domain>
</protein>
<sequence length="453" mass="47946">MNIVILAAGTGKRMRSALPKVLHPVAGRPLLSHVIATARTLQPSRLVVVVGHGAEQVRAAVAAPDIQFAVQAEQLGTGHAVRQALPLLDPAQPTLVLYGDVPLTRASTLQRLVDAARDGRYGILTVTLDDPTGYGRIVRDASGFVTRIVEQKDATPDELKIAEINTGIIVTPTAQLAMWLGALKNENAQGEYYLTDVVELAIEAGFEIVTAQPDEEWETLGVNSKAQLAELERIHQRNVADALLADGVTLADPARIDVRGTLRCGRDVSIDVNCVFEGDVTLADNVTIGANCVIRNASVGAGTRIDAFTHIDGAELGAHTVIGPYARLRPGAQLADEAHVGNFVEVKNAVIGHGSKANHLTYIGDADIGARVNIGAGTITCNYDGANKFRTVIEDDVFVGSDTQLVAPVHVGRGVTIAAGTTVWKDVADGVLALNEKTQTAKSGYVRPVKKKS</sequence>
<gene>
    <name evidence="1" type="primary">glmU</name>
    <name type="ordered locus">Bmul_2976</name>
    <name type="ordered locus">BMULJ_00257</name>
</gene>
<keyword id="KW-0012">Acyltransferase</keyword>
<keyword id="KW-0133">Cell shape</keyword>
<keyword id="KW-0961">Cell wall biogenesis/degradation</keyword>
<keyword id="KW-0963">Cytoplasm</keyword>
<keyword id="KW-0460">Magnesium</keyword>
<keyword id="KW-0479">Metal-binding</keyword>
<keyword id="KW-0511">Multifunctional enzyme</keyword>
<keyword id="KW-0548">Nucleotidyltransferase</keyword>
<keyword id="KW-0573">Peptidoglycan synthesis</keyword>
<keyword id="KW-1185">Reference proteome</keyword>
<keyword id="KW-0677">Repeat</keyword>
<keyword id="KW-0808">Transferase</keyword>
<comment type="function">
    <text evidence="1">Catalyzes the last two sequential reactions in the de novo biosynthetic pathway for UDP-N-acetylglucosamine (UDP-GlcNAc). The C-terminal domain catalyzes the transfer of acetyl group from acetyl coenzyme A to glucosamine-1-phosphate (GlcN-1-P) to produce N-acetylglucosamine-1-phosphate (GlcNAc-1-P), which is converted into UDP-GlcNAc by the transfer of uridine 5-monophosphate (from uridine 5-triphosphate), a reaction catalyzed by the N-terminal domain.</text>
</comment>
<comment type="catalytic activity">
    <reaction evidence="1">
        <text>alpha-D-glucosamine 1-phosphate + acetyl-CoA = N-acetyl-alpha-D-glucosamine 1-phosphate + CoA + H(+)</text>
        <dbReference type="Rhea" id="RHEA:13725"/>
        <dbReference type="ChEBI" id="CHEBI:15378"/>
        <dbReference type="ChEBI" id="CHEBI:57287"/>
        <dbReference type="ChEBI" id="CHEBI:57288"/>
        <dbReference type="ChEBI" id="CHEBI:57776"/>
        <dbReference type="ChEBI" id="CHEBI:58516"/>
        <dbReference type="EC" id="2.3.1.157"/>
    </reaction>
</comment>
<comment type="catalytic activity">
    <reaction evidence="1">
        <text>N-acetyl-alpha-D-glucosamine 1-phosphate + UTP + H(+) = UDP-N-acetyl-alpha-D-glucosamine + diphosphate</text>
        <dbReference type="Rhea" id="RHEA:13509"/>
        <dbReference type="ChEBI" id="CHEBI:15378"/>
        <dbReference type="ChEBI" id="CHEBI:33019"/>
        <dbReference type="ChEBI" id="CHEBI:46398"/>
        <dbReference type="ChEBI" id="CHEBI:57705"/>
        <dbReference type="ChEBI" id="CHEBI:57776"/>
        <dbReference type="EC" id="2.7.7.23"/>
    </reaction>
</comment>
<comment type="cofactor">
    <cofactor evidence="1">
        <name>Mg(2+)</name>
        <dbReference type="ChEBI" id="CHEBI:18420"/>
    </cofactor>
    <text evidence="1">Binds 1 Mg(2+) ion per subunit.</text>
</comment>
<comment type="pathway">
    <text evidence="1">Nucleotide-sugar biosynthesis; UDP-N-acetyl-alpha-D-glucosamine biosynthesis; N-acetyl-alpha-D-glucosamine 1-phosphate from alpha-D-glucosamine 6-phosphate (route II): step 2/2.</text>
</comment>
<comment type="pathway">
    <text evidence="1">Nucleotide-sugar biosynthesis; UDP-N-acetyl-alpha-D-glucosamine biosynthesis; UDP-N-acetyl-alpha-D-glucosamine from N-acetyl-alpha-D-glucosamine 1-phosphate: step 1/1.</text>
</comment>
<comment type="pathway">
    <text evidence="1">Bacterial outer membrane biogenesis; LPS lipid A biosynthesis.</text>
</comment>
<comment type="subunit">
    <text evidence="1">Homotrimer.</text>
</comment>
<comment type="subcellular location">
    <subcellularLocation>
        <location evidence="1">Cytoplasm</location>
    </subcellularLocation>
</comment>
<comment type="similarity">
    <text evidence="1">In the N-terminal section; belongs to the N-acetylglucosamine-1-phosphate uridyltransferase family.</text>
</comment>
<comment type="similarity">
    <text evidence="1">In the C-terminal section; belongs to the transferase hexapeptide repeat family.</text>
</comment>
<proteinExistence type="inferred from homology"/>
<dbReference type="EC" id="2.7.7.23" evidence="1"/>
<dbReference type="EC" id="2.3.1.157" evidence="1"/>
<dbReference type="EMBL" id="CP000868">
    <property type="protein sequence ID" value="ABX16660.1"/>
    <property type="molecule type" value="Genomic_DNA"/>
</dbReference>
<dbReference type="EMBL" id="AP009385">
    <property type="protein sequence ID" value="BAG42232.1"/>
    <property type="molecule type" value="Genomic_DNA"/>
</dbReference>
<dbReference type="RefSeq" id="WP_006416255.1">
    <property type="nucleotide sequence ID" value="NC_010084.1"/>
</dbReference>
<dbReference type="SMR" id="A9AKB1"/>
<dbReference type="STRING" id="395019.BMULJ_00257"/>
<dbReference type="GeneID" id="89571514"/>
<dbReference type="KEGG" id="bmj:BMULJ_00257"/>
<dbReference type="KEGG" id="bmu:Bmul_2976"/>
<dbReference type="eggNOG" id="COG1207">
    <property type="taxonomic scope" value="Bacteria"/>
</dbReference>
<dbReference type="HOGENOM" id="CLU_029499_15_2_4"/>
<dbReference type="UniPathway" id="UPA00113">
    <property type="reaction ID" value="UER00532"/>
</dbReference>
<dbReference type="UniPathway" id="UPA00113">
    <property type="reaction ID" value="UER00533"/>
</dbReference>
<dbReference type="UniPathway" id="UPA00973"/>
<dbReference type="Proteomes" id="UP000008815">
    <property type="component" value="Chromosome 1"/>
</dbReference>
<dbReference type="GO" id="GO:0005737">
    <property type="term" value="C:cytoplasm"/>
    <property type="evidence" value="ECO:0007669"/>
    <property type="project" value="UniProtKB-SubCell"/>
</dbReference>
<dbReference type="GO" id="GO:0016020">
    <property type="term" value="C:membrane"/>
    <property type="evidence" value="ECO:0007669"/>
    <property type="project" value="GOC"/>
</dbReference>
<dbReference type="GO" id="GO:0019134">
    <property type="term" value="F:glucosamine-1-phosphate N-acetyltransferase activity"/>
    <property type="evidence" value="ECO:0007669"/>
    <property type="project" value="UniProtKB-UniRule"/>
</dbReference>
<dbReference type="GO" id="GO:0000287">
    <property type="term" value="F:magnesium ion binding"/>
    <property type="evidence" value="ECO:0007669"/>
    <property type="project" value="UniProtKB-UniRule"/>
</dbReference>
<dbReference type="GO" id="GO:0003977">
    <property type="term" value="F:UDP-N-acetylglucosamine diphosphorylase activity"/>
    <property type="evidence" value="ECO:0007669"/>
    <property type="project" value="UniProtKB-UniRule"/>
</dbReference>
<dbReference type="GO" id="GO:0000902">
    <property type="term" value="P:cell morphogenesis"/>
    <property type="evidence" value="ECO:0007669"/>
    <property type="project" value="UniProtKB-UniRule"/>
</dbReference>
<dbReference type="GO" id="GO:0071555">
    <property type="term" value="P:cell wall organization"/>
    <property type="evidence" value="ECO:0007669"/>
    <property type="project" value="UniProtKB-KW"/>
</dbReference>
<dbReference type="GO" id="GO:0009245">
    <property type="term" value="P:lipid A biosynthetic process"/>
    <property type="evidence" value="ECO:0007669"/>
    <property type="project" value="UniProtKB-UniRule"/>
</dbReference>
<dbReference type="GO" id="GO:0009252">
    <property type="term" value="P:peptidoglycan biosynthetic process"/>
    <property type="evidence" value="ECO:0007669"/>
    <property type="project" value="UniProtKB-UniRule"/>
</dbReference>
<dbReference type="GO" id="GO:0008360">
    <property type="term" value="P:regulation of cell shape"/>
    <property type="evidence" value="ECO:0007669"/>
    <property type="project" value="UniProtKB-KW"/>
</dbReference>
<dbReference type="GO" id="GO:0006048">
    <property type="term" value="P:UDP-N-acetylglucosamine biosynthetic process"/>
    <property type="evidence" value="ECO:0007669"/>
    <property type="project" value="UniProtKB-UniPathway"/>
</dbReference>
<dbReference type="CDD" id="cd02540">
    <property type="entry name" value="GT2_GlmU_N_bac"/>
    <property type="match status" value="1"/>
</dbReference>
<dbReference type="CDD" id="cd03353">
    <property type="entry name" value="LbH_GlmU_C"/>
    <property type="match status" value="1"/>
</dbReference>
<dbReference type="Gene3D" id="2.160.10.10">
    <property type="entry name" value="Hexapeptide repeat proteins"/>
    <property type="match status" value="1"/>
</dbReference>
<dbReference type="Gene3D" id="3.90.550.10">
    <property type="entry name" value="Spore Coat Polysaccharide Biosynthesis Protein SpsA, Chain A"/>
    <property type="match status" value="1"/>
</dbReference>
<dbReference type="HAMAP" id="MF_01631">
    <property type="entry name" value="GlmU"/>
    <property type="match status" value="1"/>
</dbReference>
<dbReference type="InterPro" id="IPR005882">
    <property type="entry name" value="Bifunctional_GlmU"/>
</dbReference>
<dbReference type="InterPro" id="IPR050065">
    <property type="entry name" value="GlmU-like"/>
</dbReference>
<dbReference type="InterPro" id="IPR038009">
    <property type="entry name" value="GlmU_C_LbH"/>
</dbReference>
<dbReference type="InterPro" id="IPR001451">
    <property type="entry name" value="Hexapep"/>
</dbReference>
<dbReference type="InterPro" id="IPR018357">
    <property type="entry name" value="Hexapep_transf_CS"/>
</dbReference>
<dbReference type="InterPro" id="IPR025877">
    <property type="entry name" value="MobA-like_NTP_Trfase"/>
</dbReference>
<dbReference type="InterPro" id="IPR029044">
    <property type="entry name" value="Nucleotide-diphossugar_trans"/>
</dbReference>
<dbReference type="InterPro" id="IPR011004">
    <property type="entry name" value="Trimer_LpxA-like_sf"/>
</dbReference>
<dbReference type="NCBIfam" id="TIGR01173">
    <property type="entry name" value="glmU"/>
    <property type="match status" value="1"/>
</dbReference>
<dbReference type="PANTHER" id="PTHR43584:SF3">
    <property type="entry name" value="BIFUNCTIONAL PROTEIN GLMU"/>
    <property type="match status" value="1"/>
</dbReference>
<dbReference type="PANTHER" id="PTHR43584">
    <property type="entry name" value="NUCLEOTIDYL TRANSFERASE"/>
    <property type="match status" value="1"/>
</dbReference>
<dbReference type="Pfam" id="PF00132">
    <property type="entry name" value="Hexapep"/>
    <property type="match status" value="2"/>
</dbReference>
<dbReference type="Pfam" id="PF12804">
    <property type="entry name" value="NTP_transf_3"/>
    <property type="match status" value="1"/>
</dbReference>
<dbReference type="SUPFAM" id="SSF53448">
    <property type="entry name" value="Nucleotide-diphospho-sugar transferases"/>
    <property type="match status" value="1"/>
</dbReference>
<dbReference type="SUPFAM" id="SSF51161">
    <property type="entry name" value="Trimeric LpxA-like enzymes"/>
    <property type="match status" value="1"/>
</dbReference>
<dbReference type="PROSITE" id="PS00101">
    <property type="entry name" value="HEXAPEP_TRANSFERASES"/>
    <property type="match status" value="2"/>
</dbReference>
<feature type="chain" id="PRO_1000186417" description="Bifunctional protein GlmU">
    <location>
        <begin position="1"/>
        <end position="453"/>
    </location>
</feature>
<feature type="region of interest" description="Pyrophosphorylase" evidence="1">
    <location>
        <begin position="1"/>
        <end position="225"/>
    </location>
</feature>
<feature type="region of interest" description="Linker" evidence="1">
    <location>
        <begin position="226"/>
        <end position="246"/>
    </location>
</feature>
<feature type="region of interest" description="N-acetyltransferase" evidence="1">
    <location>
        <begin position="247"/>
        <end position="453"/>
    </location>
</feature>
<feature type="active site" description="Proton acceptor" evidence="1">
    <location>
        <position position="359"/>
    </location>
</feature>
<feature type="binding site" evidence="1">
    <location>
        <begin position="6"/>
        <end position="9"/>
    </location>
    <ligand>
        <name>UDP-N-acetyl-alpha-D-glucosamine</name>
        <dbReference type="ChEBI" id="CHEBI:57705"/>
    </ligand>
</feature>
<feature type="binding site" evidence="1">
    <location>
        <position position="20"/>
    </location>
    <ligand>
        <name>UDP-N-acetyl-alpha-D-glucosamine</name>
        <dbReference type="ChEBI" id="CHEBI:57705"/>
    </ligand>
</feature>
<feature type="binding site" evidence="1">
    <location>
        <position position="71"/>
    </location>
    <ligand>
        <name>UDP-N-acetyl-alpha-D-glucosamine</name>
        <dbReference type="ChEBI" id="CHEBI:57705"/>
    </ligand>
</feature>
<feature type="binding site" evidence="1">
    <location>
        <begin position="76"/>
        <end position="77"/>
    </location>
    <ligand>
        <name>UDP-N-acetyl-alpha-D-glucosamine</name>
        <dbReference type="ChEBI" id="CHEBI:57705"/>
    </ligand>
</feature>
<feature type="binding site" evidence="1">
    <location>
        <begin position="98"/>
        <end position="100"/>
    </location>
    <ligand>
        <name>UDP-N-acetyl-alpha-D-glucosamine</name>
        <dbReference type="ChEBI" id="CHEBI:57705"/>
    </ligand>
</feature>
<feature type="binding site" evidence="1">
    <location>
        <position position="100"/>
    </location>
    <ligand>
        <name>Mg(2+)</name>
        <dbReference type="ChEBI" id="CHEBI:18420"/>
    </ligand>
</feature>
<feature type="binding site" evidence="1">
    <location>
        <position position="135"/>
    </location>
    <ligand>
        <name>UDP-N-acetyl-alpha-D-glucosamine</name>
        <dbReference type="ChEBI" id="CHEBI:57705"/>
    </ligand>
</feature>
<feature type="binding site" evidence="1">
    <location>
        <position position="150"/>
    </location>
    <ligand>
        <name>UDP-N-acetyl-alpha-D-glucosamine</name>
        <dbReference type="ChEBI" id="CHEBI:57705"/>
    </ligand>
</feature>
<feature type="binding site" evidence="1">
    <location>
        <position position="165"/>
    </location>
    <ligand>
        <name>UDP-N-acetyl-alpha-D-glucosamine</name>
        <dbReference type="ChEBI" id="CHEBI:57705"/>
    </ligand>
</feature>
<feature type="binding site" evidence="1">
    <location>
        <position position="223"/>
    </location>
    <ligand>
        <name>Mg(2+)</name>
        <dbReference type="ChEBI" id="CHEBI:18420"/>
    </ligand>
</feature>
<feature type="binding site" evidence="1">
    <location>
        <position position="223"/>
    </location>
    <ligand>
        <name>UDP-N-acetyl-alpha-D-glucosamine</name>
        <dbReference type="ChEBI" id="CHEBI:57705"/>
    </ligand>
</feature>
<feature type="binding site" evidence="1">
    <location>
        <position position="329"/>
    </location>
    <ligand>
        <name>UDP-N-acetyl-alpha-D-glucosamine</name>
        <dbReference type="ChEBI" id="CHEBI:57705"/>
    </ligand>
</feature>
<feature type="binding site" evidence="1">
    <location>
        <position position="347"/>
    </location>
    <ligand>
        <name>UDP-N-acetyl-alpha-D-glucosamine</name>
        <dbReference type="ChEBI" id="CHEBI:57705"/>
    </ligand>
</feature>
<feature type="binding site" evidence="1">
    <location>
        <position position="362"/>
    </location>
    <ligand>
        <name>UDP-N-acetyl-alpha-D-glucosamine</name>
        <dbReference type="ChEBI" id="CHEBI:57705"/>
    </ligand>
</feature>
<feature type="binding site" evidence="1">
    <location>
        <position position="373"/>
    </location>
    <ligand>
        <name>UDP-N-acetyl-alpha-D-glucosamine</name>
        <dbReference type="ChEBI" id="CHEBI:57705"/>
    </ligand>
</feature>
<feature type="binding site" evidence="1">
    <location>
        <position position="376"/>
    </location>
    <ligand>
        <name>acetyl-CoA</name>
        <dbReference type="ChEBI" id="CHEBI:57288"/>
    </ligand>
</feature>
<feature type="binding site" evidence="1">
    <location>
        <begin position="382"/>
        <end position="383"/>
    </location>
    <ligand>
        <name>acetyl-CoA</name>
        <dbReference type="ChEBI" id="CHEBI:57288"/>
    </ligand>
</feature>
<feature type="binding site" evidence="1">
    <location>
        <position position="401"/>
    </location>
    <ligand>
        <name>acetyl-CoA</name>
        <dbReference type="ChEBI" id="CHEBI:57288"/>
    </ligand>
</feature>
<feature type="binding site" evidence="1">
    <location>
        <position position="419"/>
    </location>
    <ligand>
        <name>acetyl-CoA</name>
        <dbReference type="ChEBI" id="CHEBI:57288"/>
    </ligand>
</feature>
<evidence type="ECO:0000255" key="1">
    <source>
        <dbReference type="HAMAP-Rule" id="MF_01631"/>
    </source>
</evidence>